<gene>
    <name evidence="1" type="primary">pncB</name>
    <name type="ordered locus">XCC0681</name>
</gene>
<feature type="chain" id="PRO_0000205852" description="Nicotinate phosphoribosyltransferase">
    <location>
        <begin position="1"/>
        <end position="398"/>
    </location>
</feature>
<feature type="modified residue" description="Phosphohistidine; by autocatalysis" evidence="1">
    <location>
        <position position="214"/>
    </location>
</feature>
<name>PNCB_XANCP</name>
<organism>
    <name type="scientific">Xanthomonas campestris pv. campestris (strain ATCC 33913 / DSM 3586 / NCPPB 528 / LMG 568 / P 25)</name>
    <dbReference type="NCBI Taxonomy" id="190485"/>
    <lineage>
        <taxon>Bacteria</taxon>
        <taxon>Pseudomonadati</taxon>
        <taxon>Pseudomonadota</taxon>
        <taxon>Gammaproteobacteria</taxon>
        <taxon>Lysobacterales</taxon>
        <taxon>Lysobacteraceae</taxon>
        <taxon>Xanthomonas</taxon>
    </lineage>
</organism>
<evidence type="ECO:0000255" key="1">
    <source>
        <dbReference type="HAMAP-Rule" id="MF_00570"/>
    </source>
</evidence>
<protein>
    <recommendedName>
        <fullName evidence="1">Nicotinate phosphoribosyltransferase</fullName>
        <shortName evidence="1">NAPRTase</shortName>
        <ecNumber evidence="1">6.3.4.21</ecNumber>
    </recommendedName>
</protein>
<sequence length="398" mass="45452">MIIHSLLDTDLYKFTMMQAVLHQHPAAQVDYRFKCRTPGVDLAQFIDEISREIDALCRLRLREDEVDYLRSLRFIKPDFADFLALFHLDRKYLALAASAAHPGEIELTIRGPWLHTILFEVPLLAIINEVWFRNTSEPDFEEGRSRLREKVRSLRSMPAGCKIADYGTRRRYSRQWHGELLPLLRDGLGEQFVGTSNVFFAKQYGLTPLGTMAHEYLQAFQALGPRLRDSQVAALDSWAREYRGDLGIALSDVVGLDAFLRDFDLYFCKLFDGMRHDSGDPFDWGERVIAHLEAHRVDPRTKVLVFSDGLNIDKVMRLYEHFSPRCRLAFGVGTSLTNDLGPTPLQIVIKMVRCNGQPVAKLSDSPGKSMCEDLGYLRYLRDVFGLPPMPEAGDPARQ</sequence>
<dbReference type="EC" id="6.3.4.21" evidence="1"/>
<dbReference type="EMBL" id="AE008922">
    <property type="protein sequence ID" value="AAM39997.1"/>
    <property type="molecule type" value="Genomic_DNA"/>
</dbReference>
<dbReference type="RefSeq" id="NP_636073.1">
    <property type="nucleotide sequence ID" value="NC_003902.1"/>
</dbReference>
<dbReference type="RefSeq" id="WP_011035921.1">
    <property type="nucleotide sequence ID" value="NC_003902.1"/>
</dbReference>
<dbReference type="SMR" id="Q8PCP3"/>
<dbReference type="STRING" id="190485.XCC0681"/>
<dbReference type="EnsemblBacteria" id="AAM39997">
    <property type="protein sequence ID" value="AAM39997"/>
    <property type="gene ID" value="XCC0681"/>
</dbReference>
<dbReference type="KEGG" id="xcc:XCC0681"/>
<dbReference type="PATRIC" id="fig|190485.4.peg.747"/>
<dbReference type="eggNOG" id="COG1488">
    <property type="taxonomic scope" value="Bacteria"/>
</dbReference>
<dbReference type="HOGENOM" id="CLU_030991_1_0_6"/>
<dbReference type="OrthoDB" id="9771406at2"/>
<dbReference type="UniPathway" id="UPA00253">
    <property type="reaction ID" value="UER00457"/>
</dbReference>
<dbReference type="Proteomes" id="UP000001010">
    <property type="component" value="Chromosome"/>
</dbReference>
<dbReference type="GO" id="GO:0005829">
    <property type="term" value="C:cytosol"/>
    <property type="evidence" value="ECO:0000318"/>
    <property type="project" value="GO_Central"/>
</dbReference>
<dbReference type="GO" id="GO:0004516">
    <property type="term" value="F:nicotinate phosphoribosyltransferase activity"/>
    <property type="evidence" value="ECO:0000318"/>
    <property type="project" value="GO_Central"/>
</dbReference>
<dbReference type="GO" id="GO:0034355">
    <property type="term" value="P:NAD biosynthetic process via the salvage pathway"/>
    <property type="evidence" value="ECO:0000318"/>
    <property type="project" value="GO_Central"/>
</dbReference>
<dbReference type="CDD" id="cd01401">
    <property type="entry name" value="PncB_like"/>
    <property type="match status" value="1"/>
</dbReference>
<dbReference type="FunFam" id="3.20.140.10:FF:000008">
    <property type="entry name" value="Nicotinate phosphoribosyltransferase"/>
    <property type="match status" value="1"/>
</dbReference>
<dbReference type="Gene3D" id="3.20.140.10">
    <property type="entry name" value="nicotinate phosphoribosyltransferase"/>
    <property type="match status" value="1"/>
</dbReference>
<dbReference type="HAMAP" id="MF_00570">
    <property type="entry name" value="NAPRTase"/>
    <property type="match status" value="1"/>
</dbReference>
<dbReference type="InterPro" id="IPR041525">
    <property type="entry name" value="N/Namide_PRibTrfase"/>
</dbReference>
<dbReference type="InterPro" id="IPR040727">
    <property type="entry name" value="NAPRTase_N"/>
</dbReference>
<dbReference type="InterPro" id="IPR006406">
    <property type="entry name" value="Nic_PRibTrfase"/>
</dbReference>
<dbReference type="InterPro" id="IPR007229">
    <property type="entry name" value="Nic_PRibTrfase-Fam"/>
</dbReference>
<dbReference type="InterPro" id="IPR036068">
    <property type="entry name" value="Nicotinate_pribotase-like_C"/>
</dbReference>
<dbReference type="NCBIfam" id="TIGR01514">
    <property type="entry name" value="NAPRTase"/>
    <property type="match status" value="1"/>
</dbReference>
<dbReference type="NCBIfam" id="NF003704">
    <property type="entry name" value="PRK05321.1"/>
    <property type="match status" value="1"/>
</dbReference>
<dbReference type="PANTHER" id="PTHR11098">
    <property type="entry name" value="NICOTINATE PHOSPHORIBOSYLTRANSFERASE"/>
    <property type="match status" value="1"/>
</dbReference>
<dbReference type="PANTHER" id="PTHR11098:SF1">
    <property type="entry name" value="NICOTINATE PHOSPHORIBOSYLTRANSFERASE"/>
    <property type="match status" value="1"/>
</dbReference>
<dbReference type="Pfam" id="PF04095">
    <property type="entry name" value="NAPRTase"/>
    <property type="match status" value="1"/>
</dbReference>
<dbReference type="Pfam" id="PF17767">
    <property type="entry name" value="NAPRTase_N"/>
    <property type="match status" value="1"/>
</dbReference>
<dbReference type="PIRSF" id="PIRSF000484">
    <property type="entry name" value="NAPRT"/>
    <property type="match status" value="1"/>
</dbReference>
<dbReference type="SUPFAM" id="SSF51690">
    <property type="entry name" value="Nicotinate/Quinolinate PRTase C-terminal domain-like"/>
    <property type="match status" value="1"/>
</dbReference>
<dbReference type="SUPFAM" id="SSF54675">
    <property type="entry name" value="Nicotinate/Quinolinate PRTase N-terminal domain-like"/>
    <property type="match status" value="1"/>
</dbReference>
<comment type="function">
    <text evidence="1">Catalyzes the synthesis of beta-nicotinate D-ribonucleotide from nicotinate and 5-phospho-D-ribose 1-phosphate at the expense of ATP.</text>
</comment>
<comment type="catalytic activity">
    <reaction evidence="1">
        <text>nicotinate + 5-phospho-alpha-D-ribose 1-diphosphate + ATP + H2O = nicotinate beta-D-ribonucleotide + ADP + phosphate + diphosphate</text>
        <dbReference type="Rhea" id="RHEA:36163"/>
        <dbReference type="ChEBI" id="CHEBI:15377"/>
        <dbReference type="ChEBI" id="CHEBI:30616"/>
        <dbReference type="ChEBI" id="CHEBI:32544"/>
        <dbReference type="ChEBI" id="CHEBI:33019"/>
        <dbReference type="ChEBI" id="CHEBI:43474"/>
        <dbReference type="ChEBI" id="CHEBI:57502"/>
        <dbReference type="ChEBI" id="CHEBI:58017"/>
        <dbReference type="ChEBI" id="CHEBI:456216"/>
        <dbReference type="EC" id="6.3.4.21"/>
    </reaction>
</comment>
<comment type="pathway">
    <text evidence="1">Cofactor biosynthesis; NAD(+) biosynthesis; nicotinate D-ribonucleotide from nicotinate: step 1/1.</text>
</comment>
<comment type="PTM">
    <text evidence="1">Transiently phosphorylated on a His residue during the reaction cycle. Phosphorylation strongly increases the affinity for substrates and increases the rate of nicotinate D-ribonucleotide production. Dephosphorylation regenerates the low-affinity form of the enzyme, leading to product release.</text>
</comment>
<comment type="similarity">
    <text evidence="1">Belongs to the NAPRTase family.</text>
</comment>
<keyword id="KW-0436">Ligase</keyword>
<keyword id="KW-0597">Phosphoprotein</keyword>
<keyword id="KW-0662">Pyridine nucleotide biosynthesis</keyword>
<keyword id="KW-1185">Reference proteome</keyword>
<accession>Q8PCP3</accession>
<reference key="1">
    <citation type="journal article" date="2002" name="Nature">
        <title>Comparison of the genomes of two Xanthomonas pathogens with differing host specificities.</title>
        <authorList>
            <person name="da Silva A.C.R."/>
            <person name="Ferro J.A."/>
            <person name="Reinach F.C."/>
            <person name="Farah C.S."/>
            <person name="Furlan L.R."/>
            <person name="Quaggio R.B."/>
            <person name="Monteiro-Vitorello C.B."/>
            <person name="Van Sluys M.A."/>
            <person name="Almeida N.F. Jr."/>
            <person name="Alves L.M.C."/>
            <person name="do Amaral A.M."/>
            <person name="Bertolini M.C."/>
            <person name="Camargo L.E.A."/>
            <person name="Camarotte G."/>
            <person name="Cannavan F."/>
            <person name="Cardozo J."/>
            <person name="Chambergo F."/>
            <person name="Ciapina L.P."/>
            <person name="Cicarelli R.M.B."/>
            <person name="Coutinho L.L."/>
            <person name="Cursino-Santos J.R."/>
            <person name="El-Dorry H."/>
            <person name="Faria J.B."/>
            <person name="Ferreira A.J.S."/>
            <person name="Ferreira R.C.C."/>
            <person name="Ferro M.I.T."/>
            <person name="Formighieri E.F."/>
            <person name="Franco M.C."/>
            <person name="Greggio C.C."/>
            <person name="Gruber A."/>
            <person name="Katsuyama A.M."/>
            <person name="Kishi L.T."/>
            <person name="Leite R.P."/>
            <person name="Lemos E.G.M."/>
            <person name="Lemos M.V.F."/>
            <person name="Locali E.C."/>
            <person name="Machado M.A."/>
            <person name="Madeira A.M.B.N."/>
            <person name="Martinez-Rossi N.M."/>
            <person name="Martins E.C."/>
            <person name="Meidanis J."/>
            <person name="Menck C.F.M."/>
            <person name="Miyaki C.Y."/>
            <person name="Moon D.H."/>
            <person name="Moreira L.M."/>
            <person name="Novo M.T.M."/>
            <person name="Okura V.K."/>
            <person name="Oliveira M.C."/>
            <person name="Oliveira V.R."/>
            <person name="Pereira H.A."/>
            <person name="Rossi A."/>
            <person name="Sena J.A.D."/>
            <person name="Silva C."/>
            <person name="de Souza R.F."/>
            <person name="Spinola L.A.F."/>
            <person name="Takita M.A."/>
            <person name="Tamura R.E."/>
            <person name="Teixeira E.C."/>
            <person name="Tezza R.I.D."/>
            <person name="Trindade dos Santos M."/>
            <person name="Truffi D."/>
            <person name="Tsai S.M."/>
            <person name="White F.F."/>
            <person name="Setubal J.C."/>
            <person name="Kitajima J.P."/>
        </authorList>
    </citation>
    <scope>NUCLEOTIDE SEQUENCE [LARGE SCALE GENOMIC DNA]</scope>
    <source>
        <strain>ATCC 33913 / DSM 3586 / NCPPB 528 / LMG 568 / P 25</strain>
    </source>
</reference>
<proteinExistence type="inferred from homology"/>